<accession>Q9M290</accession>
<name>NAC61_ARATH</name>
<sequence length="228" mass="25304">MGEELSVGFRFYPTEVELLTYYLRIQLGGGNATIHSLIPILDVFSVEPTQLPNLAGERCRGDAEQWIFFVPRQEREARGGRPSRTTGSGYWKATGSPGPVFSPDNRVIGVKKTMVFYTGKAPTGRKTKWKMNEYKAVETASVSTIPKSGSSRAFDRRPTEAYAIERNLPSNGVETSSRATISTSPETSHSGGNQVDLPVNATTITQSISDMVDELSQPFWEWEQMNWS</sequence>
<dbReference type="EMBL" id="AL138641">
    <property type="protein sequence ID" value="CAB86913.1"/>
    <property type="molecule type" value="Genomic_DNA"/>
</dbReference>
<dbReference type="EMBL" id="CP002686">
    <property type="status" value="NOT_ANNOTATED_CDS"/>
    <property type="molecule type" value="Genomic_DNA"/>
</dbReference>
<dbReference type="PIR" id="T47425">
    <property type="entry name" value="T47425"/>
</dbReference>
<dbReference type="SMR" id="Q9M290"/>
<dbReference type="BioGRID" id="8880">
    <property type="interactions" value="16"/>
</dbReference>
<dbReference type="STRING" id="3702.Q9M290"/>
<dbReference type="PaxDb" id="3702-AT3G44350.2"/>
<dbReference type="ProteomicsDB" id="248928">
    <molecule id="Q9M290-1"/>
</dbReference>
<dbReference type="Araport" id="AT3G44350"/>
<dbReference type="TAIR" id="AT3G44350">
    <property type="gene designation" value="NAC061"/>
</dbReference>
<dbReference type="eggNOG" id="ENOG502QQPM">
    <property type="taxonomic scope" value="Eukaryota"/>
</dbReference>
<dbReference type="InParanoid" id="Q9M290"/>
<dbReference type="PhylomeDB" id="Q9M290"/>
<dbReference type="PRO" id="PR:Q9M290"/>
<dbReference type="Proteomes" id="UP000006548">
    <property type="component" value="Chromosome 3"/>
</dbReference>
<dbReference type="ExpressionAtlas" id="Q9M290">
    <property type="expression patterns" value="baseline and differential"/>
</dbReference>
<dbReference type="GO" id="GO:0005634">
    <property type="term" value="C:nucleus"/>
    <property type="evidence" value="ECO:0007669"/>
    <property type="project" value="UniProtKB-SubCell"/>
</dbReference>
<dbReference type="GO" id="GO:0003677">
    <property type="term" value="F:DNA binding"/>
    <property type="evidence" value="ECO:0007669"/>
    <property type="project" value="UniProtKB-KW"/>
</dbReference>
<dbReference type="GO" id="GO:0006355">
    <property type="term" value="P:regulation of DNA-templated transcription"/>
    <property type="evidence" value="ECO:0007669"/>
    <property type="project" value="InterPro"/>
</dbReference>
<dbReference type="Gene3D" id="2.170.150.80">
    <property type="entry name" value="NAC domain"/>
    <property type="match status" value="1"/>
</dbReference>
<dbReference type="InterPro" id="IPR003441">
    <property type="entry name" value="NAC-dom"/>
</dbReference>
<dbReference type="InterPro" id="IPR036093">
    <property type="entry name" value="NAC_dom_sf"/>
</dbReference>
<dbReference type="PANTHER" id="PTHR31744:SF220">
    <property type="entry name" value="LOW QUALITY PROTEIN: NAC DOMAIN-CONTAINING PROTEIN 90-LIKE"/>
    <property type="match status" value="1"/>
</dbReference>
<dbReference type="PANTHER" id="PTHR31744">
    <property type="entry name" value="PROTEIN CUP-SHAPED COTYLEDON 2-RELATED"/>
    <property type="match status" value="1"/>
</dbReference>
<dbReference type="Pfam" id="PF02365">
    <property type="entry name" value="NAM"/>
    <property type="match status" value="1"/>
</dbReference>
<dbReference type="SUPFAM" id="SSF101941">
    <property type="entry name" value="NAC domain"/>
    <property type="match status" value="1"/>
</dbReference>
<dbReference type="PROSITE" id="PS51005">
    <property type="entry name" value="NAC"/>
    <property type="match status" value="1"/>
</dbReference>
<reference key="1">
    <citation type="journal article" date="2000" name="Nature">
        <title>Sequence and analysis of chromosome 3 of the plant Arabidopsis thaliana.</title>
        <authorList>
            <person name="Salanoubat M."/>
            <person name="Lemcke K."/>
            <person name="Rieger M."/>
            <person name="Ansorge W."/>
            <person name="Unseld M."/>
            <person name="Fartmann B."/>
            <person name="Valle G."/>
            <person name="Bloecker H."/>
            <person name="Perez-Alonso M."/>
            <person name="Obermaier B."/>
            <person name="Delseny M."/>
            <person name="Boutry M."/>
            <person name="Grivell L.A."/>
            <person name="Mache R."/>
            <person name="Puigdomenech P."/>
            <person name="De Simone V."/>
            <person name="Choisne N."/>
            <person name="Artiguenave F."/>
            <person name="Robert C."/>
            <person name="Brottier P."/>
            <person name="Wincker P."/>
            <person name="Cattolico L."/>
            <person name="Weissenbach J."/>
            <person name="Saurin W."/>
            <person name="Quetier F."/>
            <person name="Schaefer M."/>
            <person name="Mueller-Auer S."/>
            <person name="Gabel C."/>
            <person name="Fuchs M."/>
            <person name="Benes V."/>
            <person name="Wurmbach E."/>
            <person name="Drzonek H."/>
            <person name="Erfle H."/>
            <person name="Jordan N."/>
            <person name="Bangert S."/>
            <person name="Wiedelmann R."/>
            <person name="Kranz H."/>
            <person name="Voss H."/>
            <person name="Holland R."/>
            <person name="Brandt P."/>
            <person name="Nyakatura G."/>
            <person name="Vezzi A."/>
            <person name="D'Angelo M."/>
            <person name="Pallavicini A."/>
            <person name="Toppo S."/>
            <person name="Simionati B."/>
            <person name="Conrad A."/>
            <person name="Hornischer K."/>
            <person name="Kauer G."/>
            <person name="Loehnert T.-H."/>
            <person name="Nordsiek G."/>
            <person name="Reichelt J."/>
            <person name="Scharfe M."/>
            <person name="Schoen O."/>
            <person name="Bargues M."/>
            <person name="Terol J."/>
            <person name="Climent J."/>
            <person name="Navarro P."/>
            <person name="Collado C."/>
            <person name="Perez-Perez A."/>
            <person name="Ottenwaelder B."/>
            <person name="Duchemin D."/>
            <person name="Cooke R."/>
            <person name="Laudie M."/>
            <person name="Berger-Llauro C."/>
            <person name="Purnelle B."/>
            <person name="Masuy D."/>
            <person name="de Haan M."/>
            <person name="Maarse A.C."/>
            <person name="Alcaraz J.-P."/>
            <person name="Cottet A."/>
            <person name="Casacuberta E."/>
            <person name="Monfort A."/>
            <person name="Argiriou A."/>
            <person name="Flores M."/>
            <person name="Liguori R."/>
            <person name="Vitale D."/>
            <person name="Mannhaupt G."/>
            <person name="Haase D."/>
            <person name="Schoof H."/>
            <person name="Rudd S."/>
            <person name="Zaccaria P."/>
            <person name="Mewes H.-W."/>
            <person name="Mayer K.F.X."/>
            <person name="Kaul S."/>
            <person name="Town C.D."/>
            <person name="Koo H.L."/>
            <person name="Tallon L.J."/>
            <person name="Jenkins J."/>
            <person name="Rooney T."/>
            <person name="Rizzo M."/>
            <person name="Walts A."/>
            <person name="Utterback T."/>
            <person name="Fujii C.Y."/>
            <person name="Shea T.P."/>
            <person name="Creasy T.H."/>
            <person name="Haas B."/>
            <person name="Maiti R."/>
            <person name="Wu D."/>
            <person name="Peterson J."/>
            <person name="Van Aken S."/>
            <person name="Pai G."/>
            <person name="Militscher J."/>
            <person name="Sellers P."/>
            <person name="Gill J.E."/>
            <person name="Feldblyum T.V."/>
            <person name="Preuss D."/>
            <person name="Lin X."/>
            <person name="Nierman W.C."/>
            <person name="Salzberg S.L."/>
            <person name="White O."/>
            <person name="Venter J.C."/>
            <person name="Fraser C.M."/>
            <person name="Kaneko T."/>
            <person name="Nakamura Y."/>
            <person name="Sato S."/>
            <person name="Kato T."/>
            <person name="Asamizu E."/>
            <person name="Sasamoto S."/>
            <person name="Kimura T."/>
            <person name="Idesawa K."/>
            <person name="Kawashima K."/>
            <person name="Kishida Y."/>
            <person name="Kiyokawa C."/>
            <person name="Kohara M."/>
            <person name="Matsumoto M."/>
            <person name="Matsuno A."/>
            <person name="Muraki A."/>
            <person name="Nakayama S."/>
            <person name="Nakazaki N."/>
            <person name="Shinpo S."/>
            <person name="Takeuchi C."/>
            <person name="Wada T."/>
            <person name="Watanabe A."/>
            <person name="Yamada M."/>
            <person name="Yasuda M."/>
            <person name="Tabata S."/>
        </authorList>
    </citation>
    <scope>NUCLEOTIDE SEQUENCE [LARGE SCALE GENOMIC DNA]</scope>
    <source>
        <strain>cv. Columbia</strain>
    </source>
</reference>
<reference key="2">
    <citation type="journal article" date="2017" name="Plant J.">
        <title>Araport11: a complete reannotation of the Arabidopsis thaliana reference genome.</title>
        <authorList>
            <person name="Cheng C.Y."/>
            <person name="Krishnakumar V."/>
            <person name="Chan A.P."/>
            <person name="Thibaud-Nissen F."/>
            <person name="Schobel S."/>
            <person name="Town C.D."/>
        </authorList>
    </citation>
    <scope>GENOME REANNOTATION</scope>
    <source>
        <strain>cv. Columbia</strain>
    </source>
</reference>
<reference key="3">
    <citation type="journal article" date="2003" name="DNA Res.">
        <title>Comprehensive analysis of NAC family genes in Oryza sativa and Arabidopsis thaliana.</title>
        <authorList>
            <person name="Ooka H."/>
            <person name="Satoh K."/>
            <person name="Doi K."/>
            <person name="Nagata T."/>
            <person name="Otomo Y."/>
            <person name="Murakami K."/>
            <person name="Matsubara K."/>
            <person name="Osato N."/>
            <person name="Kawai J."/>
            <person name="Carninci P."/>
            <person name="Hayashizaki Y."/>
            <person name="Suzuki K."/>
            <person name="Kojima K."/>
            <person name="Takahara Y."/>
            <person name="Yamamoto K."/>
            <person name="Kikuchi S."/>
        </authorList>
    </citation>
    <scope>GENE FAMILY</scope>
    <scope>NOMENCLATURE</scope>
</reference>
<gene>
    <name type="primary">NAC061</name>
    <name type="ordered locus">At3g44350</name>
    <name type="ORF">T22K7.30</name>
</gene>
<protein>
    <recommendedName>
        <fullName>Putative NAC domain-containing protein 61</fullName>
        <shortName>ANAC061</shortName>
    </recommendedName>
</protein>
<organism>
    <name type="scientific">Arabidopsis thaliana</name>
    <name type="common">Mouse-ear cress</name>
    <dbReference type="NCBI Taxonomy" id="3702"/>
    <lineage>
        <taxon>Eukaryota</taxon>
        <taxon>Viridiplantae</taxon>
        <taxon>Streptophyta</taxon>
        <taxon>Embryophyta</taxon>
        <taxon>Tracheophyta</taxon>
        <taxon>Spermatophyta</taxon>
        <taxon>Magnoliopsida</taxon>
        <taxon>eudicotyledons</taxon>
        <taxon>Gunneridae</taxon>
        <taxon>Pentapetalae</taxon>
        <taxon>rosids</taxon>
        <taxon>malvids</taxon>
        <taxon>Brassicales</taxon>
        <taxon>Brassicaceae</taxon>
        <taxon>Camelineae</taxon>
        <taxon>Arabidopsis</taxon>
    </lineage>
</organism>
<feature type="chain" id="PRO_0000132313" description="Putative NAC domain-containing protein 61">
    <location>
        <begin position="1"/>
        <end position="228"/>
    </location>
</feature>
<feature type="domain" description="NAC" evidence="1">
    <location>
        <begin position="5"/>
        <end position="156"/>
    </location>
</feature>
<feature type="region of interest" description="Disordered" evidence="2">
    <location>
        <begin position="77"/>
        <end position="96"/>
    </location>
</feature>
<feature type="region of interest" description="Disordered" evidence="2">
    <location>
        <begin position="166"/>
        <end position="197"/>
    </location>
</feature>
<feature type="compositionally biased region" description="Low complexity" evidence="2">
    <location>
        <begin position="80"/>
        <end position="89"/>
    </location>
</feature>
<feature type="compositionally biased region" description="Polar residues" evidence="2">
    <location>
        <begin position="168"/>
        <end position="193"/>
    </location>
</feature>
<comment type="subcellular location">
    <subcellularLocation>
        <location evidence="1">Nucleus</location>
    </subcellularLocation>
</comment>
<comment type="alternative products">
    <event type="alternative splicing"/>
    <isoform>
        <id>Q9M290-1</id>
        <name>1</name>
        <sequence type="displayed"/>
    </isoform>
    <text>A number of isoforms are produced. According to EST sequences.</text>
</comment>
<comment type="domain">
    <text>The NAC domain includes a DNA-binding domain and a dimerization domain.</text>
</comment>
<proteinExistence type="inferred from homology"/>
<evidence type="ECO:0000255" key="1">
    <source>
        <dbReference type="PROSITE-ProRule" id="PRU00353"/>
    </source>
</evidence>
<evidence type="ECO:0000256" key="2">
    <source>
        <dbReference type="SAM" id="MobiDB-lite"/>
    </source>
</evidence>
<keyword id="KW-0025">Alternative splicing</keyword>
<keyword id="KW-0238">DNA-binding</keyword>
<keyword id="KW-0539">Nucleus</keyword>
<keyword id="KW-1185">Reference proteome</keyword>
<keyword id="KW-0804">Transcription</keyword>
<keyword id="KW-0805">Transcription regulation</keyword>